<feature type="chain" id="PRO_0000307827" description="Caltractin ICL1f">
    <location>
        <begin position="1"/>
        <end position="183"/>
    </location>
</feature>
<feature type="domain" description="EF-hand 1" evidence="2">
    <location>
        <begin position="39"/>
        <end position="74"/>
    </location>
</feature>
<feature type="domain" description="EF-hand 2" evidence="2">
    <location>
        <begin position="75"/>
        <end position="110"/>
    </location>
</feature>
<feature type="domain" description="EF-hand 3" evidence="2">
    <location>
        <begin position="112"/>
        <end position="147"/>
    </location>
</feature>
<feature type="domain" description="EF-hand 4" evidence="2">
    <location>
        <begin position="148"/>
        <end position="183"/>
    </location>
</feature>
<feature type="region of interest" description="Disordered" evidence="3">
    <location>
        <begin position="1"/>
        <end position="30"/>
    </location>
</feature>
<feature type="compositionally biased region" description="Low complexity" evidence="3">
    <location>
        <begin position="1"/>
        <end position="19"/>
    </location>
</feature>
<feature type="binding site" evidence="2">
    <location>
        <position position="52"/>
    </location>
    <ligand>
        <name>Ca(2+)</name>
        <dbReference type="ChEBI" id="CHEBI:29108"/>
        <label>1</label>
    </ligand>
</feature>
<feature type="binding site" evidence="2">
    <location>
        <position position="54"/>
    </location>
    <ligand>
        <name>Ca(2+)</name>
        <dbReference type="ChEBI" id="CHEBI:29108"/>
        <label>1</label>
    </ligand>
</feature>
<feature type="binding site" evidence="2">
    <location>
        <position position="56"/>
    </location>
    <ligand>
        <name>Ca(2+)</name>
        <dbReference type="ChEBI" id="CHEBI:29108"/>
        <label>1</label>
    </ligand>
</feature>
<feature type="binding site" evidence="2">
    <location>
        <position position="58"/>
    </location>
    <ligand>
        <name>Ca(2+)</name>
        <dbReference type="ChEBI" id="CHEBI:29108"/>
        <label>1</label>
    </ligand>
</feature>
<feature type="binding site" evidence="2">
    <location>
        <position position="63"/>
    </location>
    <ligand>
        <name>Ca(2+)</name>
        <dbReference type="ChEBI" id="CHEBI:29108"/>
        <label>1</label>
    </ligand>
</feature>
<feature type="binding site" evidence="2">
    <location>
        <position position="88"/>
    </location>
    <ligand>
        <name>Ca(2+)</name>
        <dbReference type="ChEBI" id="CHEBI:29108"/>
        <label>2</label>
    </ligand>
</feature>
<feature type="binding site" evidence="2">
    <location>
        <position position="90"/>
    </location>
    <ligand>
        <name>Ca(2+)</name>
        <dbReference type="ChEBI" id="CHEBI:29108"/>
        <label>2</label>
    </ligand>
</feature>
<feature type="binding site" evidence="2">
    <location>
        <position position="92"/>
    </location>
    <ligand>
        <name>Ca(2+)</name>
        <dbReference type="ChEBI" id="CHEBI:29108"/>
        <label>2</label>
    </ligand>
</feature>
<feature type="binding site" evidence="2">
    <location>
        <position position="94"/>
    </location>
    <ligand>
        <name>Ca(2+)</name>
        <dbReference type="ChEBI" id="CHEBI:29108"/>
        <label>2</label>
    </ligand>
</feature>
<feature type="binding site" evidence="2">
    <location>
        <position position="99"/>
    </location>
    <ligand>
        <name>Ca(2+)</name>
        <dbReference type="ChEBI" id="CHEBI:29108"/>
        <label>2</label>
    </ligand>
</feature>
<organism>
    <name type="scientific">Paramecium tetraurelia</name>
    <dbReference type="NCBI Taxonomy" id="5888"/>
    <lineage>
        <taxon>Eukaryota</taxon>
        <taxon>Sar</taxon>
        <taxon>Alveolata</taxon>
        <taxon>Ciliophora</taxon>
        <taxon>Intramacronucleata</taxon>
        <taxon>Oligohymenophorea</taxon>
        <taxon>Peniculida</taxon>
        <taxon>Parameciidae</taxon>
        <taxon>Paramecium</taxon>
    </lineage>
</organism>
<evidence type="ECO:0000250" key="1"/>
<evidence type="ECO:0000255" key="2">
    <source>
        <dbReference type="PROSITE-ProRule" id="PRU00448"/>
    </source>
</evidence>
<evidence type="ECO:0000256" key="3">
    <source>
        <dbReference type="SAM" id="MobiDB-lite"/>
    </source>
</evidence>
<evidence type="ECO:0000305" key="4"/>
<gene>
    <name type="primary">Icl1f</name>
    <name type="ORF">GSPATT00026240001</name>
</gene>
<accession>Q3SEK2</accession>
<proteinExistence type="inferred from homology"/>
<protein>
    <recommendedName>
        <fullName>Caltractin ICL1f</fullName>
    </recommendedName>
    <alternativeName>
        <fullName>Centrin-6</fullName>
    </alternativeName>
</protein>
<comment type="function">
    <text evidence="1">Plays a fundamental role in microtubule organizing center structure and function. Component of the infraciliary lattice (ICL) and the ciliary basal bodies (By similarity).</text>
</comment>
<comment type="subunit">
    <text evidence="1">Monomer.</text>
</comment>
<comment type="subcellular location">
    <subcellularLocation>
        <location evidence="1">Cytoplasm</location>
        <location evidence="1">Cytoskeleton</location>
    </subcellularLocation>
    <text evidence="1">ICL, innermost fibrous network of the cortical cytoskeleton.</text>
</comment>
<comment type="similarity">
    <text evidence="4">Belongs to the centrin family.</text>
</comment>
<reference key="1">
    <citation type="submission" date="2005-09" db="EMBL/GenBank/DDBJ databases">
        <title>Paramecium tetraurelia centrin-related protein genes.</title>
        <authorList>
            <person name="Klotz C."/>
        </authorList>
    </citation>
    <scope>NUCLEOTIDE SEQUENCE [GENOMIC DNA]</scope>
    <source>
        <strain>Stock d4-2</strain>
    </source>
</reference>
<reference key="2">
    <citation type="journal article" date="2006" name="Nature">
        <title>Global trends of whole-genome duplications revealed by the ciliate Paramecium tetraurelia.</title>
        <authorList>
            <person name="Aury J.-M."/>
            <person name="Jaillon O."/>
            <person name="Duret L."/>
            <person name="Noel B."/>
            <person name="Jubin C."/>
            <person name="Porcel B.M."/>
            <person name="Segurens B."/>
            <person name="Daubin V."/>
            <person name="Anthouard V."/>
            <person name="Aiach N."/>
            <person name="Arnaiz O."/>
            <person name="Billaut A."/>
            <person name="Beisson J."/>
            <person name="Blanc I."/>
            <person name="Bouhouche K."/>
            <person name="Camara F."/>
            <person name="Duharcourt S."/>
            <person name="Guigo R."/>
            <person name="Gogendeau D."/>
            <person name="Katinka M."/>
            <person name="Keller A.-M."/>
            <person name="Kissmehl R."/>
            <person name="Klotz C."/>
            <person name="Koll F."/>
            <person name="Le Mouel A."/>
            <person name="Lepere G."/>
            <person name="Malinsky S."/>
            <person name="Nowacki M."/>
            <person name="Nowak J.K."/>
            <person name="Plattner H."/>
            <person name="Poulain J."/>
            <person name="Ruiz F."/>
            <person name="Serrano V."/>
            <person name="Zagulski M."/>
            <person name="Dessen P."/>
            <person name="Betermier M."/>
            <person name="Weissenbach J."/>
            <person name="Scarpelli C."/>
            <person name="Schaechter V."/>
            <person name="Sperling L."/>
            <person name="Meyer E."/>
            <person name="Cohen J."/>
            <person name="Wincker P."/>
        </authorList>
    </citation>
    <scope>NUCLEOTIDE SEQUENCE [LARGE SCALE GENOMIC DNA]</scope>
    <source>
        <strain>Stock d4-2</strain>
    </source>
</reference>
<dbReference type="EMBL" id="CR932082">
    <property type="protein sequence ID" value="CAI38922.1"/>
    <property type="molecule type" value="Genomic_DNA"/>
</dbReference>
<dbReference type="EMBL" id="CT868674">
    <property type="protein sequence ID" value="CAK93917.1"/>
    <property type="molecule type" value="Genomic_DNA"/>
</dbReference>
<dbReference type="RefSeq" id="XP_001461290.1">
    <property type="nucleotide sequence ID" value="XM_001461253.1"/>
</dbReference>
<dbReference type="SMR" id="Q3SEK2"/>
<dbReference type="STRING" id="5888.Q3SEK2"/>
<dbReference type="EnsemblProtists" id="CAK93917">
    <property type="protein sequence ID" value="CAK93917"/>
    <property type="gene ID" value="GSPATT00026240001"/>
</dbReference>
<dbReference type="GeneID" id="5047075"/>
<dbReference type="KEGG" id="ptm:GSPATT00026240001"/>
<dbReference type="eggNOG" id="KOG0028">
    <property type="taxonomic scope" value="Eukaryota"/>
</dbReference>
<dbReference type="HOGENOM" id="CLU_061288_18_2_1"/>
<dbReference type="InParanoid" id="Q3SEK2"/>
<dbReference type="OMA" id="AKNQTLY"/>
<dbReference type="OrthoDB" id="410571at2759"/>
<dbReference type="Proteomes" id="UP000000600">
    <property type="component" value="Partially assembled WGS sequence"/>
</dbReference>
<dbReference type="GO" id="GO:0005737">
    <property type="term" value="C:cytoplasm"/>
    <property type="evidence" value="ECO:0007669"/>
    <property type="project" value="UniProtKB-KW"/>
</dbReference>
<dbReference type="GO" id="GO:0005856">
    <property type="term" value="C:cytoskeleton"/>
    <property type="evidence" value="ECO:0007669"/>
    <property type="project" value="UniProtKB-SubCell"/>
</dbReference>
<dbReference type="GO" id="GO:0005509">
    <property type="term" value="F:calcium ion binding"/>
    <property type="evidence" value="ECO:0007669"/>
    <property type="project" value="InterPro"/>
</dbReference>
<dbReference type="CDD" id="cd00051">
    <property type="entry name" value="EFh"/>
    <property type="match status" value="1"/>
</dbReference>
<dbReference type="FunFam" id="1.10.238.10:FF:000178">
    <property type="entry name" value="Calmodulin-2 A"/>
    <property type="match status" value="1"/>
</dbReference>
<dbReference type="Gene3D" id="1.10.238.10">
    <property type="entry name" value="EF-hand"/>
    <property type="match status" value="2"/>
</dbReference>
<dbReference type="InterPro" id="IPR050230">
    <property type="entry name" value="CALM/Myosin/TropC-like"/>
</dbReference>
<dbReference type="InterPro" id="IPR011992">
    <property type="entry name" value="EF-hand-dom_pair"/>
</dbReference>
<dbReference type="InterPro" id="IPR018247">
    <property type="entry name" value="EF_Hand_1_Ca_BS"/>
</dbReference>
<dbReference type="InterPro" id="IPR002048">
    <property type="entry name" value="EF_hand_dom"/>
</dbReference>
<dbReference type="PANTHER" id="PTHR23048:SF59">
    <property type="entry name" value="EF-HAND SUPERFAMILY PROTEIN"/>
    <property type="match status" value="1"/>
</dbReference>
<dbReference type="PANTHER" id="PTHR23048">
    <property type="entry name" value="MYOSIN LIGHT CHAIN 1, 3"/>
    <property type="match status" value="1"/>
</dbReference>
<dbReference type="Pfam" id="PF13499">
    <property type="entry name" value="EF-hand_7"/>
    <property type="match status" value="2"/>
</dbReference>
<dbReference type="SMART" id="SM00054">
    <property type="entry name" value="EFh"/>
    <property type="match status" value="4"/>
</dbReference>
<dbReference type="SUPFAM" id="SSF47473">
    <property type="entry name" value="EF-hand"/>
    <property type="match status" value="1"/>
</dbReference>
<dbReference type="PROSITE" id="PS00018">
    <property type="entry name" value="EF_HAND_1"/>
    <property type="match status" value="2"/>
</dbReference>
<dbReference type="PROSITE" id="PS50222">
    <property type="entry name" value="EF_HAND_2"/>
    <property type="match status" value="4"/>
</dbReference>
<name>CATR6_PARTE</name>
<sequence>MARRGQQPPQQQQQAQPAQKNQAGKFNPAEFVKPGLTEEEVLEIKEAFDLFDTDGTQSIDPKELKAAMTSLGFEAKNQTIYQMISDLDTDGSGQIDFAEFLKLMTARISERDSKADIQKVFNLFDSERAGFITLKDLRKVAKELGETMDDSELQEMIDRADSDGDTQVTFEDFYNIMTKKTFA</sequence>
<keyword id="KW-0106">Calcium</keyword>
<keyword id="KW-0963">Cytoplasm</keyword>
<keyword id="KW-0206">Cytoskeleton</keyword>
<keyword id="KW-0479">Metal-binding</keyword>
<keyword id="KW-1185">Reference proteome</keyword>
<keyword id="KW-0677">Repeat</keyword>